<name>PGK_FERNB</name>
<organism>
    <name type="scientific">Fervidobacterium nodosum (strain ATCC 35602 / DSM 5306 / Rt17-B1)</name>
    <dbReference type="NCBI Taxonomy" id="381764"/>
    <lineage>
        <taxon>Bacteria</taxon>
        <taxon>Thermotogati</taxon>
        <taxon>Thermotogota</taxon>
        <taxon>Thermotogae</taxon>
        <taxon>Thermotogales</taxon>
        <taxon>Fervidobacteriaceae</taxon>
        <taxon>Fervidobacterium</taxon>
    </lineage>
</organism>
<dbReference type="EC" id="2.7.2.3" evidence="1"/>
<dbReference type="EMBL" id="CP000771">
    <property type="protein sequence ID" value="ABS60594.1"/>
    <property type="molecule type" value="Genomic_DNA"/>
</dbReference>
<dbReference type="RefSeq" id="WP_011993912.1">
    <property type="nucleotide sequence ID" value="NC_009718.1"/>
</dbReference>
<dbReference type="SMR" id="A7HL11"/>
<dbReference type="STRING" id="381764.Fnod_0739"/>
<dbReference type="KEGG" id="fno:Fnod_0739"/>
<dbReference type="eggNOG" id="COG0126">
    <property type="taxonomic scope" value="Bacteria"/>
</dbReference>
<dbReference type="HOGENOM" id="CLU_025427_0_2_0"/>
<dbReference type="OrthoDB" id="9808460at2"/>
<dbReference type="UniPathway" id="UPA00109">
    <property type="reaction ID" value="UER00185"/>
</dbReference>
<dbReference type="Proteomes" id="UP000002415">
    <property type="component" value="Chromosome"/>
</dbReference>
<dbReference type="GO" id="GO:0005829">
    <property type="term" value="C:cytosol"/>
    <property type="evidence" value="ECO:0007669"/>
    <property type="project" value="TreeGrafter"/>
</dbReference>
<dbReference type="GO" id="GO:0043531">
    <property type="term" value="F:ADP binding"/>
    <property type="evidence" value="ECO:0007669"/>
    <property type="project" value="TreeGrafter"/>
</dbReference>
<dbReference type="GO" id="GO:0005524">
    <property type="term" value="F:ATP binding"/>
    <property type="evidence" value="ECO:0007669"/>
    <property type="project" value="UniProtKB-KW"/>
</dbReference>
<dbReference type="GO" id="GO:0004618">
    <property type="term" value="F:phosphoglycerate kinase activity"/>
    <property type="evidence" value="ECO:0007669"/>
    <property type="project" value="UniProtKB-UniRule"/>
</dbReference>
<dbReference type="GO" id="GO:0006094">
    <property type="term" value="P:gluconeogenesis"/>
    <property type="evidence" value="ECO:0007669"/>
    <property type="project" value="TreeGrafter"/>
</dbReference>
<dbReference type="GO" id="GO:0006096">
    <property type="term" value="P:glycolytic process"/>
    <property type="evidence" value="ECO:0007669"/>
    <property type="project" value="UniProtKB-UniRule"/>
</dbReference>
<dbReference type="CDD" id="cd00318">
    <property type="entry name" value="Phosphoglycerate_kinase"/>
    <property type="match status" value="1"/>
</dbReference>
<dbReference type="FunFam" id="3.40.50.1260:FF:000002">
    <property type="entry name" value="Phosphoglycerate kinase"/>
    <property type="match status" value="1"/>
</dbReference>
<dbReference type="FunFam" id="3.40.50.1260:FF:000007">
    <property type="entry name" value="Phosphoglycerate kinase"/>
    <property type="match status" value="1"/>
</dbReference>
<dbReference type="Gene3D" id="3.40.50.1260">
    <property type="entry name" value="Phosphoglycerate kinase, N-terminal domain"/>
    <property type="match status" value="2"/>
</dbReference>
<dbReference type="HAMAP" id="MF_00145">
    <property type="entry name" value="Phosphoglyc_kinase"/>
    <property type="match status" value="1"/>
</dbReference>
<dbReference type="InterPro" id="IPR001576">
    <property type="entry name" value="Phosphoglycerate_kinase"/>
</dbReference>
<dbReference type="InterPro" id="IPR015911">
    <property type="entry name" value="Phosphoglycerate_kinase_CS"/>
</dbReference>
<dbReference type="InterPro" id="IPR015824">
    <property type="entry name" value="Phosphoglycerate_kinase_N"/>
</dbReference>
<dbReference type="InterPro" id="IPR036043">
    <property type="entry name" value="Phosphoglycerate_kinase_sf"/>
</dbReference>
<dbReference type="PANTHER" id="PTHR11406">
    <property type="entry name" value="PHOSPHOGLYCERATE KINASE"/>
    <property type="match status" value="1"/>
</dbReference>
<dbReference type="PANTHER" id="PTHR11406:SF23">
    <property type="entry name" value="PHOSPHOGLYCERATE KINASE 1, CHLOROPLASTIC-RELATED"/>
    <property type="match status" value="1"/>
</dbReference>
<dbReference type="Pfam" id="PF00162">
    <property type="entry name" value="PGK"/>
    <property type="match status" value="1"/>
</dbReference>
<dbReference type="PIRSF" id="PIRSF000724">
    <property type="entry name" value="Pgk"/>
    <property type="match status" value="1"/>
</dbReference>
<dbReference type="PRINTS" id="PR00477">
    <property type="entry name" value="PHGLYCKINASE"/>
</dbReference>
<dbReference type="SUPFAM" id="SSF53748">
    <property type="entry name" value="Phosphoglycerate kinase"/>
    <property type="match status" value="1"/>
</dbReference>
<dbReference type="PROSITE" id="PS00111">
    <property type="entry name" value="PGLYCERATE_KINASE"/>
    <property type="match status" value="1"/>
</dbReference>
<accession>A7HL11</accession>
<proteinExistence type="inferred from homology"/>
<keyword id="KW-0067">ATP-binding</keyword>
<keyword id="KW-0963">Cytoplasm</keyword>
<keyword id="KW-0324">Glycolysis</keyword>
<keyword id="KW-0418">Kinase</keyword>
<keyword id="KW-0547">Nucleotide-binding</keyword>
<keyword id="KW-1185">Reference proteome</keyword>
<keyword id="KW-0808">Transferase</keyword>
<evidence type="ECO:0000255" key="1">
    <source>
        <dbReference type="HAMAP-Rule" id="MF_00145"/>
    </source>
</evidence>
<protein>
    <recommendedName>
        <fullName evidence="1">Phosphoglycerate kinase</fullName>
        <ecNumber evidence="1">2.7.2.3</ecNumber>
    </recommendedName>
</protein>
<gene>
    <name evidence="1" type="primary">pgk</name>
    <name type="ordered locus">Fnod_0739</name>
</gene>
<reference key="1">
    <citation type="submission" date="2007-07" db="EMBL/GenBank/DDBJ databases">
        <title>Complete sequence of Fervidobacterium nodosum Rt17-B1.</title>
        <authorList>
            <consortium name="US DOE Joint Genome Institute"/>
            <person name="Copeland A."/>
            <person name="Lucas S."/>
            <person name="Lapidus A."/>
            <person name="Barry K."/>
            <person name="Glavina del Rio T."/>
            <person name="Dalin E."/>
            <person name="Tice H."/>
            <person name="Pitluck S."/>
            <person name="Saunders E."/>
            <person name="Brettin T."/>
            <person name="Bruce D."/>
            <person name="Detter J.C."/>
            <person name="Han C."/>
            <person name="Schmutz J."/>
            <person name="Larimer F."/>
            <person name="Land M."/>
            <person name="Hauser L."/>
            <person name="Kyrpides N."/>
            <person name="Mikhailova N."/>
            <person name="Nelson K."/>
            <person name="Gogarten J.P."/>
            <person name="Noll K."/>
            <person name="Richardson P."/>
        </authorList>
    </citation>
    <scope>NUCLEOTIDE SEQUENCE [LARGE SCALE GENOMIC DNA]</scope>
    <source>
        <strain>ATCC 35602 / DSM 5306 / Rt17-B1</strain>
    </source>
</reference>
<feature type="chain" id="PRO_1000071470" description="Phosphoglycerate kinase">
    <location>
        <begin position="1"/>
        <end position="400"/>
    </location>
</feature>
<feature type="binding site" evidence="1">
    <location>
        <begin position="21"/>
        <end position="23"/>
    </location>
    <ligand>
        <name>substrate</name>
    </ligand>
</feature>
<feature type="binding site" evidence="1">
    <location>
        <position position="36"/>
    </location>
    <ligand>
        <name>substrate</name>
    </ligand>
</feature>
<feature type="binding site" evidence="1">
    <location>
        <begin position="59"/>
        <end position="62"/>
    </location>
    <ligand>
        <name>substrate</name>
    </ligand>
</feature>
<feature type="binding site" evidence="1">
    <location>
        <position position="118"/>
    </location>
    <ligand>
        <name>substrate</name>
    </ligand>
</feature>
<feature type="binding site" evidence="1">
    <location>
        <position position="151"/>
    </location>
    <ligand>
        <name>substrate</name>
    </ligand>
</feature>
<feature type="binding site" evidence="1">
    <location>
        <position position="201"/>
    </location>
    <ligand>
        <name>ATP</name>
        <dbReference type="ChEBI" id="CHEBI:30616"/>
    </ligand>
</feature>
<feature type="binding site" evidence="1">
    <location>
        <position position="293"/>
    </location>
    <ligand>
        <name>ATP</name>
        <dbReference type="ChEBI" id="CHEBI:30616"/>
    </ligand>
</feature>
<feature type="binding site" evidence="1">
    <location>
        <position position="324"/>
    </location>
    <ligand>
        <name>ATP</name>
        <dbReference type="ChEBI" id="CHEBI:30616"/>
    </ligand>
</feature>
<feature type="binding site" evidence="1">
    <location>
        <begin position="353"/>
        <end position="356"/>
    </location>
    <ligand>
        <name>ATP</name>
        <dbReference type="ChEBI" id="CHEBI:30616"/>
    </ligand>
</feature>
<sequence length="400" mass="43110">MEKLTIRDVDLKGKRVIMRVDFNVPIKDGVVTDDTRIVEALPTIKYVLEQGAKVILLTHLGRPKGGPDPKYTVKPAAERLAQLLGKEVKFVPALYGEEVEKAVAELKEGEVLMLENTRFDPGEEKNDLELAKKWASLADIHVNDAFGTAHRAHSSNVGIAQYIPSVAGFLMEKEIKFLSKATHNPDKPYVVVLGGAKVSDKIGVITNLLNKADKIIIGGAMMFTFWRALGKQTGNSLVEEDKIDLAKQLLEQAKEKGVELVIPTDAVCAQKMEAGVEKKVFTCEEGIPEGWAGYDIGPASIELIKSKLADAKTIVWNGPLGVFEIEDFANGTKAVAEFIASLTDKGVTTVVGGGDSAAAVSQFGLEKKFSHVSTGGGASLEFLEGKELPGIASIADKKKQ</sequence>
<comment type="catalytic activity">
    <reaction evidence="1">
        <text>(2R)-3-phosphoglycerate + ATP = (2R)-3-phospho-glyceroyl phosphate + ADP</text>
        <dbReference type="Rhea" id="RHEA:14801"/>
        <dbReference type="ChEBI" id="CHEBI:30616"/>
        <dbReference type="ChEBI" id="CHEBI:57604"/>
        <dbReference type="ChEBI" id="CHEBI:58272"/>
        <dbReference type="ChEBI" id="CHEBI:456216"/>
        <dbReference type="EC" id="2.7.2.3"/>
    </reaction>
</comment>
<comment type="pathway">
    <text evidence="1">Carbohydrate degradation; glycolysis; pyruvate from D-glyceraldehyde 3-phosphate: step 2/5.</text>
</comment>
<comment type="subunit">
    <text evidence="1">Monomer.</text>
</comment>
<comment type="subcellular location">
    <subcellularLocation>
        <location evidence="1">Cytoplasm</location>
    </subcellularLocation>
</comment>
<comment type="similarity">
    <text evidence="1">Belongs to the phosphoglycerate kinase family.</text>
</comment>